<sequence>MFIRPVLSSSLGHAARSSLRSQAPAVRQYATEAGKSSGGSNLPLVLALGGVAGIGAWYGLGGFDDPKKVSNKIQEKGKEAVDQAKGAVEGGALNKDQFVEFTLKEIKPYNHDSATLIFELPEGKKPGMGVASAVVVKAVGDGLKDDQGKDVIRPYTPITSPDTVGHMDFLVKKYPGGKMTTYMHSMKPGDKLGIKGPIAKFAYKANEFESIGMIAGGSGITPMYQVIQDIASNPSDKTKVTLIYSNKTEQDILLREQFDQLAKKDDRFTIIYGLDKLPKGFNGFEGYVTEDLVKKHLPQPELADKAKIFVCGPPPQVEAISGKKGPKGSQGELKGLLAKLGYQADQVYKF</sequence>
<gene>
    <name type="primary">MCR1</name>
    <name type="ORF">UMAG_03775</name>
</gene>
<feature type="chain" id="PRO_0000330191" description="NADH-cytochrome b5 reductase 2">
    <location>
        <begin position="1"/>
        <end position="350"/>
    </location>
</feature>
<feature type="transmembrane region" description="Helical" evidence="2">
    <location>
        <begin position="43"/>
        <end position="63"/>
    </location>
</feature>
<feature type="domain" description="FAD-binding FR-type" evidence="3">
    <location>
        <begin position="96"/>
        <end position="204"/>
    </location>
</feature>
<feature type="binding site" evidence="1">
    <location>
        <begin position="207"/>
        <end position="242"/>
    </location>
    <ligand>
        <name>FAD</name>
        <dbReference type="ChEBI" id="CHEBI:57692"/>
    </ligand>
</feature>
<reference key="1">
    <citation type="journal article" date="2006" name="Nature">
        <title>Insights from the genome of the biotrophic fungal plant pathogen Ustilago maydis.</title>
        <authorList>
            <person name="Kaemper J."/>
            <person name="Kahmann R."/>
            <person name="Boelker M."/>
            <person name="Ma L.-J."/>
            <person name="Brefort T."/>
            <person name="Saville B.J."/>
            <person name="Banuett F."/>
            <person name="Kronstad J.W."/>
            <person name="Gold S.E."/>
            <person name="Mueller O."/>
            <person name="Perlin M.H."/>
            <person name="Woesten H.A.B."/>
            <person name="de Vries R."/>
            <person name="Ruiz-Herrera J."/>
            <person name="Reynaga-Pena C.G."/>
            <person name="Snetselaar K."/>
            <person name="McCann M."/>
            <person name="Perez-Martin J."/>
            <person name="Feldbruegge M."/>
            <person name="Basse C.W."/>
            <person name="Steinberg G."/>
            <person name="Ibeas J.I."/>
            <person name="Holloman W."/>
            <person name="Guzman P."/>
            <person name="Farman M.L."/>
            <person name="Stajich J.E."/>
            <person name="Sentandreu R."/>
            <person name="Gonzalez-Prieto J.M."/>
            <person name="Kennell J.C."/>
            <person name="Molina L."/>
            <person name="Schirawski J."/>
            <person name="Mendoza-Mendoza A."/>
            <person name="Greilinger D."/>
            <person name="Muench K."/>
            <person name="Roessel N."/>
            <person name="Scherer M."/>
            <person name="Vranes M."/>
            <person name="Ladendorf O."/>
            <person name="Vincon V."/>
            <person name="Fuchs U."/>
            <person name="Sandrock B."/>
            <person name="Meng S."/>
            <person name="Ho E.C.H."/>
            <person name="Cahill M.J."/>
            <person name="Boyce K.J."/>
            <person name="Klose J."/>
            <person name="Klosterman S.J."/>
            <person name="Deelstra H.J."/>
            <person name="Ortiz-Castellanos L."/>
            <person name="Li W."/>
            <person name="Sanchez-Alonso P."/>
            <person name="Schreier P.H."/>
            <person name="Haeuser-Hahn I."/>
            <person name="Vaupel M."/>
            <person name="Koopmann E."/>
            <person name="Friedrich G."/>
            <person name="Voss H."/>
            <person name="Schlueter T."/>
            <person name="Margolis J."/>
            <person name="Platt D."/>
            <person name="Swimmer C."/>
            <person name="Gnirke A."/>
            <person name="Chen F."/>
            <person name="Vysotskaia V."/>
            <person name="Mannhaupt G."/>
            <person name="Gueldener U."/>
            <person name="Muensterkoetter M."/>
            <person name="Haase D."/>
            <person name="Oesterheld M."/>
            <person name="Mewes H.-W."/>
            <person name="Mauceli E.W."/>
            <person name="DeCaprio D."/>
            <person name="Wade C.M."/>
            <person name="Butler J."/>
            <person name="Young S.K."/>
            <person name="Jaffe D.B."/>
            <person name="Calvo S.E."/>
            <person name="Nusbaum C."/>
            <person name="Galagan J.E."/>
            <person name="Birren B.W."/>
        </authorList>
    </citation>
    <scope>NUCLEOTIDE SEQUENCE [LARGE SCALE GENOMIC DNA]</scope>
    <source>
        <strain>DSM 14603 / FGSC 9021 / UM521</strain>
    </source>
</reference>
<reference key="2">
    <citation type="submission" date="2014-09" db="EMBL/GenBank/DDBJ databases">
        <authorList>
            <person name="Gueldener U."/>
            <person name="Muensterkoetter M."/>
            <person name="Walter M.C."/>
            <person name="Mannhaupt G."/>
            <person name="Kahmann R."/>
        </authorList>
    </citation>
    <scope>GENOME REANNOTATION</scope>
    <source>
        <strain>DSM 14603 / FGSC 9021 / UM521</strain>
    </source>
</reference>
<comment type="function">
    <text evidence="1">May mediate the reduction of outer membrane cytochrome b5.</text>
</comment>
<comment type="catalytic activity">
    <reaction>
        <text>2 Fe(III)-[cytochrome b5] + NADH = 2 Fe(II)-[cytochrome b5] + NAD(+) + H(+)</text>
        <dbReference type="Rhea" id="RHEA:46680"/>
        <dbReference type="Rhea" id="RHEA-COMP:10438"/>
        <dbReference type="Rhea" id="RHEA-COMP:10439"/>
        <dbReference type="ChEBI" id="CHEBI:15378"/>
        <dbReference type="ChEBI" id="CHEBI:29033"/>
        <dbReference type="ChEBI" id="CHEBI:29034"/>
        <dbReference type="ChEBI" id="CHEBI:57540"/>
        <dbReference type="ChEBI" id="CHEBI:57945"/>
        <dbReference type="EC" id="1.6.2.2"/>
    </reaction>
</comment>
<comment type="cofactor">
    <cofactor evidence="1">
        <name>FAD</name>
        <dbReference type="ChEBI" id="CHEBI:57692"/>
    </cofactor>
</comment>
<comment type="subcellular location">
    <subcellularLocation>
        <location evidence="1">Mitochondrion outer membrane</location>
        <topology evidence="1">Single-pass membrane protein</topology>
    </subcellularLocation>
</comment>
<comment type="similarity">
    <text evidence="4">Belongs to the flavoprotein pyridine nucleotide cytochrome reductase family.</text>
</comment>
<name>MCR1_MYCMD</name>
<accession>Q4P7Y8</accession>
<accession>A0A0D1DX78</accession>
<organism>
    <name type="scientific">Mycosarcoma maydis</name>
    <name type="common">Corn smut fungus</name>
    <name type="synonym">Ustilago maydis</name>
    <dbReference type="NCBI Taxonomy" id="5270"/>
    <lineage>
        <taxon>Eukaryota</taxon>
        <taxon>Fungi</taxon>
        <taxon>Dikarya</taxon>
        <taxon>Basidiomycota</taxon>
        <taxon>Ustilaginomycotina</taxon>
        <taxon>Ustilaginomycetes</taxon>
        <taxon>Ustilaginales</taxon>
        <taxon>Ustilaginaceae</taxon>
        <taxon>Mycosarcoma</taxon>
    </lineage>
</organism>
<protein>
    <recommendedName>
        <fullName>NADH-cytochrome b5 reductase 2</fullName>
        <ecNumber>1.6.2.2</ecNumber>
    </recommendedName>
    <alternativeName>
        <fullName>Mitochondrial cytochrome b reductase</fullName>
    </alternativeName>
</protein>
<keyword id="KW-0274">FAD</keyword>
<keyword id="KW-0285">Flavoprotein</keyword>
<keyword id="KW-0472">Membrane</keyword>
<keyword id="KW-0496">Mitochondrion</keyword>
<keyword id="KW-1000">Mitochondrion outer membrane</keyword>
<keyword id="KW-0520">NAD</keyword>
<keyword id="KW-0560">Oxidoreductase</keyword>
<keyword id="KW-1185">Reference proteome</keyword>
<keyword id="KW-0812">Transmembrane</keyword>
<keyword id="KW-1133">Transmembrane helix</keyword>
<evidence type="ECO:0000250" key="1"/>
<evidence type="ECO:0000255" key="2"/>
<evidence type="ECO:0000255" key="3">
    <source>
        <dbReference type="PROSITE-ProRule" id="PRU00716"/>
    </source>
</evidence>
<evidence type="ECO:0000305" key="4"/>
<dbReference type="EC" id="1.6.2.2"/>
<dbReference type="EMBL" id="CM003149">
    <property type="protein sequence ID" value="KIS68196.1"/>
    <property type="molecule type" value="Genomic_DNA"/>
</dbReference>
<dbReference type="RefSeq" id="XP_011390225.1">
    <property type="nucleotide sequence ID" value="XM_011391923.1"/>
</dbReference>
<dbReference type="SMR" id="Q4P7Y8"/>
<dbReference type="STRING" id="237631.Q4P7Y8"/>
<dbReference type="EnsemblFungi" id="KIS68196">
    <property type="protein sequence ID" value="KIS68196"/>
    <property type="gene ID" value="UMAG_03775"/>
</dbReference>
<dbReference type="GeneID" id="23564140"/>
<dbReference type="KEGG" id="uma:UMAG_03775"/>
<dbReference type="VEuPathDB" id="FungiDB:UMAG_03775"/>
<dbReference type="eggNOG" id="KOG0534">
    <property type="taxonomic scope" value="Eukaryota"/>
</dbReference>
<dbReference type="HOGENOM" id="CLU_003827_9_1_1"/>
<dbReference type="InParanoid" id="Q4P7Y8"/>
<dbReference type="OMA" id="YKANTID"/>
<dbReference type="OrthoDB" id="432685at2759"/>
<dbReference type="Proteomes" id="UP000000561">
    <property type="component" value="Chromosome 10"/>
</dbReference>
<dbReference type="GO" id="GO:0005741">
    <property type="term" value="C:mitochondrial outer membrane"/>
    <property type="evidence" value="ECO:0007669"/>
    <property type="project" value="UniProtKB-SubCell"/>
</dbReference>
<dbReference type="GO" id="GO:0004128">
    <property type="term" value="F:cytochrome-b5 reductase activity, acting on NAD(P)H"/>
    <property type="evidence" value="ECO:0000318"/>
    <property type="project" value="GO_Central"/>
</dbReference>
<dbReference type="CDD" id="cd06183">
    <property type="entry name" value="cyt_b5_reduct_like"/>
    <property type="match status" value="1"/>
</dbReference>
<dbReference type="FunFam" id="2.40.30.10:FF:000069">
    <property type="entry name" value="NADH-cytochrome b5 reductase"/>
    <property type="match status" value="1"/>
</dbReference>
<dbReference type="FunFam" id="3.40.50.80:FF:000009">
    <property type="entry name" value="NADH-cytochrome b5 reductase"/>
    <property type="match status" value="1"/>
</dbReference>
<dbReference type="Gene3D" id="3.40.50.80">
    <property type="entry name" value="Nucleotide-binding domain of ferredoxin-NADP reductase (FNR) module"/>
    <property type="match status" value="1"/>
</dbReference>
<dbReference type="Gene3D" id="2.40.30.10">
    <property type="entry name" value="Translation factors"/>
    <property type="match status" value="1"/>
</dbReference>
<dbReference type="InterPro" id="IPR001834">
    <property type="entry name" value="CBR-like"/>
</dbReference>
<dbReference type="InterPro" id="IPR008333">
    <property type="entry name" value="Cbr1-like_FAD-bd_dom"/>
</dbReference>
<dbReference type="InterPro" id="IPR017927">
    <property type="entry name" value="FAD-bd_FR_type"/>
</dbReference>
<dbReference type="InterPro" id="IPR001709">
    <property type="entry name" value="Flavoprot_Pyr_Nucl_cyt_Rdtase"/>
</dbReference>
<dbReference type="InterPro" id="IPR039261">
    <property type="entry name" value="FNR_nucleotide-bd"/>
</dbReference>
<dbReference type="InterPro" id="IPR001433">
    <property type="entry name" value="OxRdtase_FAD/NAD-bd"/>
</dbReference>
<dbReference type="InterPro" id="IPR017938">
    <property type="entry name" value="Riboflavin_synthase-like_b-brl"/>
</dbReference>
<dbReference type="PANTHER" id="PTHR19370">
    <property type="entry name" value="NADH-CYTOCHROME B5 REDUCTASE"/>
    <property type="match status" value="1"/>
</dbReference>
<dbReference type="PANTHER" id="PTHR19370:SF171">
    <property type="entry name" value="NADH-CYTOCHROME B5 REDUCTASE 2"/>
    <property type="match status" value="1"/>
</dbReference>
<dbReference type="Pfam" id="PF00970">
    <property type="entry name" value="FAD_binding_6"/>
    <property type="match status" value="1"/>
</dbReference>
<dbReference type="Pfam" id="PF00175">
    <property type="entry name" value="NAD_binding_1"/>
    <property type="match status" value="1"/>
</dbReference>
<dbReference type="PRINTS" id="PR00406">
    <property type="entry name" value="CYTB5RDTASE"/>
</dbReference>
<dbReference type="PRINTS" id="PR00371">
    <property type="entry name" value="FPNCR"/>
</dbReference>
<dbReference type="SUPFAM" id="SSF52343">
    <property type="entry name" value="Ferredoxin reductase-like, C-terminal NADP-linked domain"/>
    <property type="match status" value="1"/>
</dbReference>
<dbReference type="SUPFAM" id="SSF63380">
    <property type="entry name" value="Riboflavin synthase domain-like"/>
    <property type="match status" value="1"/>
</dbReference>
<dbReference type="PROSITE" id="PS51384">
    <property type="entry name" value="FAD_FR"/>
    <property type="match status" value="1"/>
</dbReference>
<proteinExistence type="inferred from homology"/>